<dbReference type="EMBL" id="CT573326">
    <property type="protein sequence ID" value="CAK13440.1"/>
    <property type="molecule type" value="Genomic_DNA"/>
</dbReference>
<dbReference type="RefSeq" id="WP_003255482.1">
    <property type="nucleotide sequence ID" value="NC_008027.1"/>
</dbReference>
<dbReference type="SMR" id="Q1IFW2"/>
<dbReference type="STRING" id="384676.PSEEN0494"/>
<dbReference type="GeneID" id="97165983"/>
<dbReference type="KEGG" id="pen:PSEEN0494"/>
<dbReference type="eggNOG" id="COG0185">
    <property type="taxonomic scope" value="Bacteria"/>
</dbReference>
<dbReference type="HOGENOM" id="CLU_144911_0_1_6"/>
<dbReference type="OrthoDB" id="9797833at2"/>
<dbReference type="Proteomes" id="UP000000658">
    <property type="component" value="Chromosome"/>
</dbReference>
<dbReference type="GO" id="GO:0005737">
    <property type="term" value="C:cytoplasm"/>
    <property type="evidence" value="ECO:0007669"/>
    <property type="project" value="UniProtKB-ARBA"/>
</dbReference>
<dbReference type="GO" id="GO:0015935">
    <property type="term" value="C:small ribosomal subunit"/>
    <property type="evidence" value="ECO:0007669"/>
    <property type="project" value="InterPro"/>
</dbReference>
<dbReference type="GO" id="GO:0019843">
    <property type="term" value="F:rRNA binding"/>
    <property type="evidence" value="ECO:0007669"/>
    <property type="project" value="UniProtKB-UniRule"/>
</dbReference>
<dbReference type="GO" id="GO:0003735">
    <property type="term" value="F:structural constituent of ribosome"/>
    <property type="evidence" value="ECO:0007669"/>
    <property type="project" value="InterPro"/>
</dbReference>
<dbReference type="GO" id="GO:0000028">
    <property type="term" value="P:ribosomal small subunit assembly"/>
    <property type="evidence" value="ECO:0007669"/>
    <property type="project" value="TreeGrafter"/>
</dbReference>
<dbReference type="GO" id="GO:0006412">
    <property type="term" value="P:translation"/>
    <property type="evidence" value="ECO:0007669"/>
    <property type="project" value="UniProtKB-UniRule"/>
</dbReference>
<dbReference type="FunFam" id="3.30.860.10:FF:000001">
    <property type="entry name" value="30S ribosomal protein S19"/>
    <property type="match status" value="1"/>
</dbReference>
<dbReference type="Gene3D" id="3.30.860.10">
    <property type="entry name" value="30s Ribosomal Protein S19, Chain A"/>
    <property type="match status" value="1"/>
</dbReference>
<dbReference type="HAMAP" id="MF_00531">
    <property type="entry name" value="Ribosomal_uS19"/>
    <property type="match status" value="1"/>
</dbReference>
<dbReference type="InterPro" id="IPR002222">
    <property type="entry name" value="Ribosomal_uS19"/>
</dbReference>
<dbReference type="InterPro" id="IPR005732">
    <property type="entry name" value="Ribosomal_uS19_bac-type"/>
</dbReference>
<dbReference type="InterPro" id="IPR020934">
    <property type="entry name" value="Ribosomal_uS19_CS"/>
</dbReference>
<dbReference type="InterPro" id="IPR023575">
    <property type="entry name" value="Ribosomal_uS19_SF"/>
</dbReference>
<dbReference type="NCBIfam" id="TIGR01050">
    <property type="entry name" value="rpsS_bact"/>
    <property type="match status" value="1"/>
</dbReference>
<dbReference type="PANTHER" id="PTHR11880">
    <property type="entry name" value="RIBOSOMAL PROTEIN S19P FAMILY MEMBER"/>
    <property type="match status" value="1"/>
</dbReference>
<dbReference type="PANTHER" id="PTHR11880:SF8">
    <property type="entry name" value="SMALL RIBOSOMAL SUBUNIT PROTEIN US19M"/>
    <property type="match status" value="1"/>
</dbReference>
<dbReference type="Pfam" id="PF00203">
    <property type="entry name" value="Ribosomal_S19"/>
    <property type="match status" value="1"/>
</dbReference>
<dbReference type="PIRSF" id="PIRSF002144">
    <property type="entry name" value="Ribosomal_S19"/>
    <property type="match status" value="1"/>
</dbReference>
<dbReference type="PRINTS" id="PR00975">
    <property type="entry name" value="RIBOSOMALS19"/>
</dbReference>
<dbReference type="SUPFAM" id="SSF54570">
    <property type="entry name" value="Ribosomal protein S19"/>
    <property type="match status" value="1"/>
</dbReference>
<dbReference type="PROSITE" id="PS00323">
    <property type="entry name" value="RIBOSOMAL_S19"/>
    <property type="match status" value="1"/>
</dbReference>
<keyword id="KW-0687">Ribonucleoprotein</keyword>
<keyword id="KW-0689">Ribosomal protein</keyword>
<keyword id="KW-0694">RNA-binding</keyword>
<keyword id="KW-0699">rRNA-binding</keyword>
<protein>
    <recommendedName>
        <fullName evidence="1">Small ribosomal subunit protein uS19</fullName>
    </recommendedName>
    <alternativeName>
        <fullName evidence="2">30S ribosomal protein S19</fullName>
    </alternativeName>
</protein>
<proteinExistence type="inferred from homology"/>
<feature type="chain" id="PRO_1000051104" description="Small ribosomal subunit protein uS19">
    <location>
        <begin position="1"/>
        <end position="91"/>
    </location>
</feature>
<name>RS19_PSEE4</name>
<reference key="1">
    <citation type="journal article" date="2006" name="Nat. Biotechnol.">
        <title>Complete genome sequence of the entomopathogenic and metabolically versatile soil bacterium Pseudomonas entomophila.</title>
        <authorList>
            <person name="Vodovar N."/>
            <person name="Vallenet D."/>
            <person name="Cruveiller S."/>
            <person name="Rouy Z."/>
            <person name="Barbe V."/>
            <person name="Acosta C."/>
            <person name="Cattolico L."/>
            <person name="Jubin C."/>
            <person name="Lajus A."/>
            <person name="Segurens B."/>
            <person name="Vacherie B."/>
            <person name="Wincker P."/>
            <person name="Weissenbach J."/>
            <person name="Lemaitre B."/>
            <person name="Medigue C."/>
            <person name="Boccard F."/>
        </authorList>
    </citation>
    <scope>NUCLEOTIDE SEQUENCE [LARGE SCALE GENOMIC DNA]</scope>
    <source>
        <strain>L48</strain>
    </source>
</reference>
<comment type="function">
    <text evidence="1">Protein S19 forms a complex with S13 that binds strongly to the 16S ribosomal RNA.</text>
</comment>
<comment type="similarity">
    <text evidence="1">Belongs to the universal ribosomal protein uS19 family.</text>
</comment>
<gene>
    <name evidence="1" type="primary">rpsS</name>
    <name type="ordered locus">PSEEN0494</name>
</gene>
<sequence length="91" mass="10348">MPRSLKKGPFIDLHLLKKVEVAVEKNDRKPVKTWSRRSMILPQMVGLTIAVHNGRQHVPVLVNEDMVGHKLGEFAGTRTYRGHVADKKAKR</sequence>
<accession>Q1IFW2</accession>
<organism>
    <name type="scientific">Pseudomonas entomophila (strain L48)</name>
    <dbReference type="NCBI Taxonomy" id="384676"/>
    <lineage>
        <taxon>Bacteria</taxon>
        <taxon>Pseudomonadati</taxon>
        <taxon>Pseudomonadota</taxon>
        <taxon>Gammaproteobacteria</taxon>
        <taxon>Pseudomonadales</taxon>
        <taxon>Pseudomonadaceae</taxon>
        <taxon>Pseudomonas</taxon>
    </lineage>
</organism>
<evidence type="ECO:0000255" key="1">
    <source>
        <dbReference type="HAMAP-Rule" id="MF_00531"/>
    </source>
</evidence>
<evidence type="ECO:0000305" key="2"/>